<proteinExistence type="evidence at protein level"/>
<dbReference type="EMBL" id="AB182579">
    <property type="protein sequence ID" value="BAE86912.1"/>
    <property type="molecule type" value="mRNA"/>
</dbReference>
<dbReference type="EMBL" id="AK151086">
    <property type="protein sequence ID" value="BAE30099.1"/>
    <property type="molecule type" value="mRNA"/>
</dbReference>
<dbReference type="EMBL" id="AK164043">
    <property type="protein sequence ID" value="BAE37602.1"/>
    <property type="molecule type" value="mRNA"/>
</dbReference>
<dbReference type="EMBL" id="AK165558">
    <property type="protein sequence ID" value="BAE38255.1"/>
    <property type="molecule type" value="mRNA"/>
</dbReference>
<dbReference type="EMBL" id="AC167333">
    <property type="status" value="NOT_ANNOTATED_CDS"/>
    <property type="molecule type" value="Genomic_DNA"/>
</dbReference>
<dbReference type="EMBL" id="CH466529">
    <property type="protein sequence ID" value="EDL19139.1"/>
    <property type="molecule type" value="Genomic_DNA"/>
</dbReference>
<dbReference type="CCDS" id="CCDS39353.2"/>
<dbReference type="RefSeq" id="NP_777275.2">
    <property type="nucleotide sequence ID" value="NM_174850.3"/>
</dbReference>
<dbReference type="SMR" id="Q3TN34"/>
<dbReference type="BioGRID" id="231173">
    <property type="interactions" value="6"/>
</dbReference>
<dbReference type="CORUM" id="Q3TN34"/>
<dbReference type="FunCoup" id="Q3TN34">
    <property type="interactions" value="328"/>
</dbReference>
<dbReference type="IntAct" id="Q3TN34">
    <property type="interactions" value="4"/>
</dbReference>
<dbReference type="MINT" id="Q3TN34"/>
<dbReference type="STRING" id="10090.ENSMUSP00000039707"/>
<dbReference type="GlyGen" id="Q3TN34">
    <property type="glycosylation" value="28 sites, 1 O-linked glycan (27 sites)"/>
</dbReference>
<dbReference type="iPTMnet" id="Q3TN34"/>
<dbReference type="PhosphoSitePlus" id="Q3TN34"/>
<dbReference type="SwissPalm" id="Q3TN34"/>
<dbReference type="jPOST" id="Q3TN34"/>
<dbReference type="PaxDb" id="10090-ENSMUSP00000039707"/>
<dbReference type="PeptideAtlas" id="Q3TN34"/>
<dbReference type="ProteomicsDB" id="295669"/>
<dbReference type="Pumba" id="Q3TN34"/>
<dbReference type="Antibodypedia" id="24191">
    <property type="antibodies" value="80 antibodies from 22 providers"/>
</dbReference>
<dbReference type="DNASU" id="231830"/>
<dbReference type="Ensembl" id="ENSMUST00000044642.14">
    <property type="protein sequence ID" value="ENSMUSP00000039707.11"/>
    <property type="gene ID" value="ENSMUSG00000036718.18"/>
</dbReference>
<dbReference type="GeneID" id="231830"/>
<dbReference type="KEGG" id="mmu:231830"/>
<dbReference type="UCSC" id="uc009agx.2">
    <property type="organism name" value="mouse"/>
</dbReference>
<dbReference type="AGR" id="MGI:2444818"/>
<dbReference type="CTD" id="79778"/>
<dbReference type="MGI" id="MGI:2444818">
    <property type="gene designation" value="Micall2"/>
</dbReference>
<dbReference type="VEuPathDB" id="HostDB:ENSMUSG00000036718"/>
<dbReference type="eggNOG" id="ENOG502QVVF">
    <property type="taxonomic scope" value="Eukaryota"/>
</dbReference>
<dbReference type="GeneTree" id="ENSGT00940000160222"/>
<dbReference type="HOGENOM" id="CLU_015382_0_0_1"/>
<dbReference type="InParanoid" id="Q3TN34"/>
<dbReference type="OMA" id="DWFQLIH"/>
<dbReference type="OrthoDB" id="10017054at2759"/>
<dbReference type="PhylomeDB" id="Q3TN34"/>
<dbReference type="TreeFam" id="TF328311"/>
<dbReference type="BioGRID-ORCS" id="231830">
    <property type="hits" value="0 hits in 78 CRISPR screens"/>
</dbReference>
<dbReference type="PRO" id="PR:Q3TN34"/>
<dbReference type="Proteomes" id="UP000000589">
    <property type="component" value="Chromosome 5"/>
</dbReference>
<dbReference type="RNAct" id="Q3TN34">
    <property type="molecule type" value="protein"/>
</dbReference>
<dbReference type="Bgee" id="ENSMUSG00000036718">
    <property type="expression patterns" value="Expressed in ectoplacental cone and 154 other cell types or tissues"/>
</dbReference>
<dbReference type="ExpressionAtlas" id="Q3TN34">
    <property type="expression patterns" value="baseline and differential"/>
</dbReference>
<dbReference type="GO" id="GO:0032432">
    <property type="term" value="C:actin filament bundle"/>
    <property type="evidence" value="ECO:0000314"/>
    <property type="project" value="MGI"/>
</dbReference>
<dbReference type="GO" id="GO:0005923">
    <property type="term" value="C:bicellular tight junction"/>
    <property type="evidence" value="ECO:0000314"/>
    <property type="project" value="MGI"/>
</dbReference>
<dbReference type="GO" id="GO:0005911">
    <property type="term" value="C:cell-cell junction"/>
    <property type="evidence" value="ECO:0000314"/>
    <property type="project" value="UniProtKB"/>
</dbReference>
<dbReference type="GO" id="GO:0043005">
    <property type="term" value="C:neuron projection"/>
    <property type="evidence" value="ECO:0000250"/>
    <property type="project" value="UniProtKB"/>
</dbReference>
<dbReference type="GO" id="GO:0005886">
    <property type="term" value="C:plasma membrane"/>
    <property type="evidence" value="ECO:0000314"/>
    <property type="project" value="UniProtKB"/>
</dbReference>
<dbReference type="GO" id="GO:0055037">
    <property type="term" value="C:recycling endosome"/>
    <property type="evidence" value="ECO:0000314"/>
    <property type="project" value="UniProtKB"/>
</dbReference>
<dbReference type="GO" id="GO:0051015">
    <property type="term" value="F:actin filament binding"/>
    <property type="evidence" value="ECO:0000314"/>
    <property type="project" value="UniProtKB"/>
</dbReference>
<dbReference type="GO" id="GO:0042805">
    <property type="term" value="F:actinin binding"/>
    <property type="evidence" value="ECO:0000353"/>
    <property type="project" value="UniProtKB"/>
</dbReference>
<dbReference type="GO" id="GO:0031005">
    <property type="term" value="F:filamin binding"/>
    <property type="evidence" value="ECO:0000314"/>
    <property type="project" value="UniProtKB"/>
</dbReference>
<dbReference type="GO" id="GO:0046872">
    <property type="term" value="F:metal ion binding"/>
    <property type="evidence" value="ECO:0007669"/>
    <property type="project" value="UniProtKB-KW"/>
</dbReference>
<dbReference type="GO" id="GO:0031267">
    <property type="term" value="F:small GTPase binding"/>
    <property type="evidence" value="ECO:0000353"/>
    <property type="project" value="UniProtKB"/>
</dbReference>
<dbReference type="GO" id="GO:0030036">
    <property type="term" value="P:actin cytoskeleton organization"/>
    <property type="evidence" value="ECO:0000315"/>
    <property type="project" value="UniProtKB"/>
</dbReference>
<dbReference type="GO" id="GO:0030041">
    <property type="term" value="P:actin filament polymerization"/>
    <property type="evidence" value="ECO:0000315"/>
    <property type="project" value="UniProtKB"/>
</dbReference>
<dbReference type="GO" id="GO:0070830">
    <property type="term" value="P:bicellular tight junction assembly"/>
    <property type="evidence" value="ECO:0000315"/>
    <property type="project" value="UniProtKB"/>
</dbReference>
<dbReference type="GO" id="GO:0032456">
    <property type="term" value="P:endocytic recycling"/>
    <property type="evidence" value="ECO:0000314"/>
    <property type="project" value="MGI"/>
</dbReference>
<dbReference type="GO" id="GO:0097750">
    <property type="term" value="P:endosome membrane tubulation"/>
    <property type="evidence" value="ECO:0000314"/>
    <property type="project" value="UniProtKB"/>
</dbReference>
<dbReference type="GO" id="GO:0031175">
    <property type="term" value="P:neuron projection development"/>
    <property type="evidence" value="ECO:0000315"/>
    <property type="project" value="UniProtKB"/>
</dbReference>
<dbReference type="GO" id="GO:0032482">
    <property type="term" value="P:Rab protein signal transduction"/>
    <property type="evidence" value="ECO:0000314"/>
    <property type="project" value="UniProtKB"/>
</dbReference>
<dbReference type="GO" id="GO:0034446">
    <property type="term" value="P:substrate adhesion-dependent cell spreading"/>
    <property type="evidence" value="ECO:0000315"/>
    <property type="project" value="UniProtKB"/>
</dbReference>
<dbReference type="CDD" id="cd21253">
    <property type="entry name" value="CH_MICALL2"/>
    <property type="match status" value="1"/>
</dbReference>
<dbReference type="CDD" id="cd09444">
    <property type="entry name" value="LIM_Mical_like_1"/>
    <property type="match status" value="1"/>
</dbReference>
<dbReference type="FunFam" id="1.10.418.10:FF:000055">
    <property type="entry name" value="MICAL-like protein 2"/>
    <property type="match status" value="1"/>
</dbReference>
<dbReference type="Gene3D" id="1.10.418.10">
    <property type="entry name" value="Calponin-like domain"/>
    <property type="match status" value="1"/>
</dbReference>
<dbReference type="Gene3D" id="2.10.110.10">
    <property type="entry name" value="Cysteine Rich Protein"/>
    <property type="match status" value="1"/>
</dbReference>
<dbReference type="InterPro" id="IPR022735">
    <property type="entry name" value="bMERB_dom"/>
</dbReference>
<dbReference type="InterPro" id="IPR001715">
    <property type="entry name" value="CH_dom"/>
</dbReference>
<dbReference type="InterPro" id="IPR036872">
    <property type="entry name" value="CH_dom_sf"/>
</dbReference>
<dbReference type="InterPro" id="IPR050540">
    <property type="entry name" value="F-actin_Monoox_Mical"/>
</dbReference>
<dbReference type="InterPro" id="IPR001781">
    <property type="entry name" value="Znf_LIM"/>
</dbReference>
<dbReference type="PANTHER" id="PTHR23167">
    <property type="entry name" value="CALPONIN HOMOLOGY DOMAIN-CONTAINING PROTEIN DDB_G0272472-RELATED"/>
    <property type="match status" value="1"/>
</dbReference>
<dbReference type="PANTHER" id="PTHR23167:SF87">
    <property type="entry name" value="MICAL-LIKE PROTEIN 2"/>
    <property type="match status" value="1"/>
</dbReference>
<dbReference type="Pfam" id="PF12130">
    <property type="entry name" value="bMERB_dom"/>
    <property type="match status" value="1"/>
</dbReference>
<dbReference type="Pfam" id="PF00307">
    <property type="entry name" value="CH"/>
    <property type="match status" value="1"/>
</dbReference>
<dbReference type="Pfam" id="PF00412">
    <property type="entry name" value="LIM"/>
    <property type="match status" value="1"/>
</dbReference>
<dbReference type="SMART" id="SM00033">
    <property type="entry name" value="CH"/>
    <property type="match status" value="1"/>
</dbReference>
<dbReference type="SMART" id="SM01203">
    <property type="entry name" value="DUF3585"/>
    <property type="match status" value="1"/>
</dbReference>
<dbReference type="SMART" id="SM00132">
    <property type="entry name" value="LIM"/>
    <property type="match status" value="1"/>
</dbReference>
<dbReference type="SUPFAM" id="SSF47576">
    <property type="entry name" value="Calponin-homology domain, CH-domain"/>
    <property type="match status" value="1"/>
</dbReference>
<dbReference type="SUPFAM" id="SSF57716">
    <property type="entry name" value="Glucocorticoid receptor-like (DNA-binding domain)"/>
    <property type="match status" value="2"/>
</dbReference>
<dbReference type="PROSITE" id="PS51848">
    <property type="entry name" value="BMERB"/>
    <property type="match status" value="1"/>
</dbReference>
<dbReference type="PROSITE" id="PS50021">
    <property type="entry name" value="CH"/>
    <property type="match status" value="1"/>
</dbReference>
<dbReference type="PROSITE" id="PS00478">
    <property type="entry name" value="LIM_DOMAIN_1"/>
    <property type="match status" value="1"/>
</dbReference>
<dbReference type="PROSITE" id="PS50023">
    <property type="entry name" value="LIM_DOMAIN_2"/>
    <property type="match status" value="1"/>
</dbReference>
<evidence type="ECO:0000250" key="1">
    <source>
        <dbReference type="UniProtKB" id="Q8IY33"/>
    </source>
</evidence>
<evidence type="ECO:0000255" key="2"/>
<evidence type="ECO:0000255" key="3">
    <source>
        <dbReference type="PROSITE-ProRule" id="PRU00044"/>
    </source>
</evidence>
<evidence type="ECO:0000255" key="4">
    <source>
        <dbReference type="PROSITE-ProRule" id="PRU00125"/>
    </source>
</evidence>
<evidence type="ECO:0000255" key="5">
    <source>
        <dbReference type="PROSITE-ProRule" id="PRU01195"/>
    </source>
</evidence>
<evidence type="ECO:0000256" key="6">
    <source>
        <dbReference type="SAM" id="MobiDB-lite"/>
    </source>
</evidence>
<evidence type="ECO:0000269" key="7">
    <source>
    </source>
</evidence>
<evidence type="ECO:0000269" key="8">
    <source>
    </source>
</evidence>
<evidence type="ECO:0000269" key="9">
    <source>
    </source>
</evidence>
<evidence type="ECO:0000269" key="10">
    <source>
    </source>
</evidence>
<evidence type="ECO:0000269" key="11">
    <source>
    </source>
</evidence>
<evidence type="ECO:0000269" key="12">
    <source>
    </source>
</evidence>
<evidence type="ECO:0000269" key="13">
    <source>
    </source>
</evidence>
<evidence type="ECO:0000305" key="14"/>
<evidence type="ECO:0007744" key="15">
    <source>
    </source>
</evidence>
<evidence type="ECO:0007744" key="16">
    <source>
    </source>
</evidence>
<protein>
    <recommendedName>
        <fullName>MICAL-like protein 2</fullName>
    </recommendedName>
    <alternativeName>
        <fullName>Junctional Rab13-binding protein</fullName>
    </alternativeName>
    <alternativeName>
        <fullName>Molecule interacting with CasL-like 2</fullName>
        <shortName>MICAL-L2</shortName>
    </alternativeName>
</protein>
<reference key="1">
    <citation type="journal article" date="2006" name="Mol. Biol. Cell">
        <title>JRAB/MICAL-L2 is a junctional Rab13-binding protein mediating the endocytic recycling of occludin.</title>
        <authorList>
            <person name="Terai T."/>
            <person name="Nishimura N."/>
            <person name="Kanda I."/>
            <person name="Yasui N."/>
            <person name="Sasaki T."/>
        </authorList>
    </citation>
    <scope>NUCLEOTIDE SEQUENCE [MRNA]</scope>
    <scope>FUNCTION IN TIGHT JUNCTION ASSEMBLY</scope>
    <scope>INTERACTION WITH RAB13</scope>
    <scope>SUBCELLULAR LOCATION</scope>
    <scope>TISSUE SPECIFICITY</scope>
    <source>
        <tissue>Brain</tissue>
    </source>
</reference>
<reference key="2">
    <citation type="journal article" date="2005" name="Science">
        <title>The transcriptional landscape of the mammalian genome.</title>
        <authorList>
            <person name="Carninci P."/>
            <person name="Kasukawa T."/>
            <person name="Katayama S."/>
            <person name="Gough J."/>
            <person name="Frith M.C."/>
            <person name="Maeda N."/>
            <person name="Oyama R."/>
            <person name="Ravasi T."/>
            <person name="Lenhard B."/>
            <person name="Wells C."/>
            <person name="Kodzius R."/>
            <person name="Shimokawa K."/>
            <person name="Bajic V.B."/>
            <person name="Brenner S.E."/>
            <person name="Batalov S."/>
            <person name="Forrest A.R."/>
            <person name="Zavolan M."/>
            <person name="Davis M.J."/>
            <person name="Wilming L.G."/>
            <person name="Aidinis V."/>
            <person name="Allen J.E."/>
            <person name="Ambesi-Impiombato A."/>
            <person name="Apweiler R."/>
            <person name="Aturaliya R.N."/>
            <person name="Bailey T.L."/>
            <person name="Bansal M."/>
            <person name="Baxter L."/>
            <person name="Beisel K.W."/>
            <person name="Bersano T."/>
            <person name="Bono H."/>
            <person name="Chalk A.M."/>
            <person name="Chiu K.P."/>
            <person name="Choudhary V."/>
            <person name="Christoffels A."/>
            <person name="Clutterbuck D.R."/>
            <person name="Crowe M.L."/>
            <person name="Dalla E."/>
            <person name="Dalrymple B.P."/>
            <person name="de Bono B."/>
            <person name="Della Gatta G."/>
            <person name="di Bernardo D."/>
            <person name="Down T."/>
            <person name="Engstrom P."/>
            <person name="Fagiolini M."/>
            <person name="Faulkner G."/>
            <person name="Fletcher C.F."/>
            <person name="Fukushima T."/>
            <person name="Furuno M."/>
            <person name="Futaki S."/>
            <person name="Gariboldi M."/>
            <person name="Georgii-Hemming P."/>
            <person name="Gingeras T.R."/>
            <person name="Gojobori T."/>
            <person name="Green R.E."/>
            <person name="Gustincich S."/>
            <person name="Harbers M."/>
            <person name="Hayashi Y."/>
            <person name="Hensch T.K."/>
            <person name="Hirokawa N."/>
            <person name="Hill D."/>
            <person name="Huminiecki L."/>
            <person name="Iacono M."/>
            <person name="Ikeo K."/>
            <person name="Iwama A."/>
            <person name="Ishikawa T."/>
            <person name="Jakt M."/>
            <person name="Kanapin A."/>
            <person name="Katoh M."/>
            <person name="Kawasawa Y."/>
            <person name="Kelso J."/>
            <person name="Kitamura H."/>
            <person name="Kitano H."/>
            <person name="Kollias G."/>
            <person name="Krishnan S.P."/>
            <person name="Kruger A."/>
            <person name="Kummerfeld S.K."/>
            <person name="Kurochkin I.V."/>
            <person name="Lareau L.F."/>
            <person name="Lazarevic D."/>
            <person name="Lipovich L."/>
            <person name="Liu J."/>
            <person name="Liuni S."/>
            <person name="McWilliam S."/>
            <person name="Madan Babu M."/>
            <person name="Madera M."/>
            <person name="Marchionni L."/>
            <person name="Matsuda H."/>
            <person name="Matsuzawa S."/>
            <person name="Miki H."/>
            <person name="Mignone F."/>
            <person name="Miyake S."/>
            <person name="Morris K."/>
            <person name="Mottagui-Tabar S."/>
            <person name="Mulder N."/>
            <person name="Nakano N."/>
            <person name="Nakauchi H."/>
            <person name="Ng P."/>
            <person name="Nilsson R."/>
            <person name="Nishiguchi S."/>
            <person name="Nishikawa S."/>
            <person name="Nori F."/>
            <person name="Ohara O."/>
            <person name="Okazaki Y."/>
            <person name="Orlando V."/>
            <person name="Pang K.C."/>
            <person name="Pavan W.J."/>
            <person name="Pavesi G."/>
            <person name="Pesole G."/>
            <person name="Petrovsky N."/>
            <person name="Piazza S."/>
            <person name="Reed J."/>
            <person name="Reid J.F."/>
            <person name="Ring B.Z."/>
            <person name="Ringwald M."/>
            <person name="Rost B."/>
            <person name="Ruan Y."/>
            <person name="Salzberg S.L."/>
            <person name="Sandelin A."/>
            <person name="Schneider C."/>
            <person name="Schoenbach C."/>
            <person name="Sekiguchi K."/>
            <person name="Semple C.A."/>
            <person name="Seno S."/>
            <person name="Sessa L."/>
            <person name="Sheng Y."/>
            <person name="Shibata Y."/>
            <person name="Shimada H."/>
            <person name="Shimada K."/>
            <person name="Silva D."/>
            <person name="Sinclair B."/>
            <person name="Sperling S."/>
            <person name="Stupka E."/>
            <person name="Sugiura K."/>
            <person name="Sultana R."/>
            <person name="Takenaka Y."/>
            <person name="Taki K."/>
            <person name="Tammoja K."/>
            <person name="Tan S.L."/>
            <person name="Tang S."/>
            <person name="Taylor M.S."/>
            <person name="Tegner J."/>
            <person name="Teichmann S.A."/>
            <person name="Ueda H.R."/>
            <person name="van Nimwegen E."/>
            <person name="Verardo R."/>
            <person name="Wei C.L."/>
            <person name="Yagi K."/>
            <person name="Yamanishi H."/>
            <person name="Zabarovsky E."/>
            <person name="Zhu S."/>
            <person name="Zimmer A."/>
            <person name="Hide W."/>
            <person name="Bult C."/>
            <person name="Grimmond S.M."/>
            <person name="Teasdale R.D."/>
            <person name="Liu E.T."/>
            <person name="Brusic V."/>
            <person name="Quackenbush J."/>
            <person name="Wahlestedt C."/>
            <person name="Mattick J.S."/>
            <person name="Hume D.A."/>
            <person name="Kai C."/>
            <person name="Sasaki D."/>
            <person name="Tomaru Y."/>
            <person name="Fukuda S."/>
            <person name="Kanamori-Katayama M."/>
            <person name="Suzuki M."/>
            <person name="Aoki J."/>
            <person name="Arakawa T."/>
            <person name="Iida J."/>
            <person name="Imamura K."/>
            <person name="Itoh M."/>
            <person name="Kato T."/>
            <person name="Kawaji H."/>
            <person name="Kawagashira N."/>
            <person name="Kawashima T."/>
            <person name="Kojima M."/>
            <person name="Kondo S."/>
            <person name="Konno H."/>
            <person name="Nakano K."/>
            <person name="Ninomiya N."/>
            <person name="Nishio T."/>
            <person name="Okada M."/>
            <person name="Plessy C."/>
            <person name="Shibata K."/>
            <person name="Shiraki T."/>
            <person name="Suzuki S."/>
            <person name="Tagami M."/>
            <person name="Waki K."/>
            <person name="Watahiki A."/>
            <person name="Okamura-Oho Y."/>
            <person name="Suzuki H."/>
            <person name="Kawai J."/>
            <person name="Hayashizaki Y."/>
        </authorList>
    </citation>
    <scope>NUCLEOTIDE SEQUENCE [LARGE SCALE MRNA]</scope>
    <source>
        <strain>BALB/cJ</strain>
        <tissue>B-cell</tissue>
        <tissue>Bone marrow</tissue>
        <tissue>Embryo</tissue>
    </source>
</reference>
<reference key="3">
    <citation type="journal article" date="2009" name="PLoS Biol.">
        <title>Lineage-specific biology revealed by a finished genome assembly of the mouse.</title>
        <authorList>
            <person name="Church D.M."/>
            <person name="Goodstadt L."/>
            <person name="Hillier L.W."/>
            <person name="Zody M.C."/>
            <person name="Goldstein S."/>
            <person name="She X."/>
            <person name="Bult C.J."/>
            <person name="Agarwala R."/>
            <person name="Cherry J.L."/>
            <person name="DiCuccio M."/>
            <person name="Hlavina W."/>
            <person name="Kapustin Y."/>
            <person name="Meric P."/>
            <person name="Maglott D."/>
            <person name="Birtle Z."/>
            <person name="Marques A.C."/>
            <person name="Graves T."/>
            <person name="Zhou S."/>
            <person name="Teague B."/>
            <person name="Potamousis K."/>
            <person name="Churas C."/>
            <person name="Place M."/>
            <person name="Herschleb J."/>
            <person name="Runnheim R."/>
            <person name="Forrest D."/>
            <person name="Amos-Landgraf J."/>
            <person name="Schwartz D.C."/>
            <person name="Cheng Z."/>
            <person name="Lindblad-Toh K."/>
            <person name="Eichler E.E."/>
            <person name="Ponting C.P."/>
        </authorList>
    </citation>
    <scope>NUCLEOTIDE SEQUENCE [LARGE SCALE GENOMIC DNA]</scope>
    <source>
        <strain>C57BL/6J</strain>
    </source>
</reference>
<reference key="4">
    <citation type="submission" date="2005-09" db="EMBL/GenBank/DDBJ databases">
        <authorList>
            <person name="Mural R.J."/>
            <person name="Adams M.D."/>
            <person name="Myers E.W."/>
            <person name="Smith H.O."/>
            <person name="Venter J.C."/>
        </authorList>
    </citation>
    <scope>NUCLEOTIDE SEQUENCE [LARGE SCALE GENOMIC DNA]</scope>
</reference>
<reference key="5">
    <citation type="journal article" date="2008" name="Mol. Biol. Cell">
        <title>The interaction of JRAB/MICAL-L2 with Rab8 and Rab13 coordinates the assembly of tight junctions and adherens junctions.</title>
        <authorList>
            <person name="Yamamura R."/>
            <person name="Nishimura N."/>
            <person name="Nakatsuji H."/>
            <person name="Arase S."/>
            <person name="Sasaki T."/>
        </authorList>
    </citation>
    <scope>FUNCTION IN ENDOCYTIC RECYCLING</scope>
    <scope>SUBCELLULAR LOCATION</scope>
    <scope>INTERACTION WITH RAB8A; RAB8B AND RAB13</scope>
</reference>
<reference key="6">
    <citation type="journal article" date="2008" name="Mol. Cell. Biol.">
        <title>Involvement of actinin-4 in the recruitment of JRAB/MICAL-L2 to cell-cell junctions and the formation of functional tight junctions.</title>
        <authorList>
            <person name="Nakatsuji H."/>
            <person name="Nishimura N."/>
            <person name="Yamamura R."/>
            <person name="Kanayama H.O."/>
            <person name="Sasaki T."/>
        </authorList>
    </citation>
    <scope>INTERACTION WITH ACTN4</scope>
    <scope>SUBCELLULAR LOCATION</scope>
</reference>
<reference key="7">
    <citation type="journal article" date="2009" name="Immunity">
        <title>The phagosomal proteome in interferon-gamma-activated macrophages.</title>
        <authorList>
            <person name="Trost M."/>
            <person name="English L."/>
            <person name="Lemieux S."/>
            <person name="Courcelles M."/>
            <person name="Desjardins M."/>
            <person name="Thibault P."/>
        </authorList>
    </citation>
    <scope>PHOSPHORYLATION [LARGE SCALE ANALYSIS] AT SER-832</scope>
    <scope>IDENTIFICATION BY MASS SPECTROMETRY [LARGE SCALE ANALYSIS]</scope>
</reference>
<reference key="8">
    <citation type="journal article" date="2010" name="Cell">
        <title>A tissue-specific atlas of mouse protein phosphorylation and expression.</title>
        <authorList>
            <person name="Huttlin E.L."/>
            <person name="Jedrychowski M.P."/>
            <person name="Elias J.E."/>
            <person name="Goswami T."/>
            <person name="Rad R."/>
            <person name="Beausoleil S.A."/>
            <person name="Villen J."/>
            <person name="Haas W."/>
            <person name="Sowa M.E."/>
            <person name="Gygi S.P."/>
        </authorList>
    </citation>
    <scope>PHOSPHORYLATION [LARGE SCALE ANALYSIS] AT SER-766</scope>
    <scope>IDENTIFICATION BY MASS SPECTROMETRY [LARGE SCALE ANALYSIS]</scope>
    <source>
        <tissue>Spleen</tissue>
    </source>
</reference>
<reference key="9">
    <citation type="journal article" date="2010" name="Mol. Cell. Biol.">
        <title>Rab13 regulates neurite outgrowth in PC12 cells through its effector protein, JRAB/MICAL-L2.</title>
        <authorList>
            <person name="Sakane A."/>
            <person name="Honda K."/>
            <person name="Sasaki T."/>
        </authorList>
    </citation>
    <scope>FUNCTION IN NEURITE OUTGROWTH</scope>
    <scope>INTERACTION WITH RAB13</scope>
    <scope>SUBCELLULAR LOCATION</scope>
    <scope>DOMAIN</scope>
</reference>
<reference key="10">
    <citation type="journal article" date="2012" name="J. Biol. Chem.">
        <title>Rab13 small G protein and junctional Rab13-binding protein (JRAB) orchestrate actin cytoskeletal organization during epithelial junctional development.</title>
        <authorList>
            <person name="Sakane A."/>
            <person name="Abdallah A.A."/>
            <person name="Nakano K."/>
            <person name="Honda K."/>
            <person name="Ikeda W."/>
            <person name="Nishikawa Y."/>
            <person name="Matsumoto M."/>
            <person name="Matsushita N."/>
            <person name="Kitamura T."/>
            <person name="Sasaki T."/>
        </authorList>
    </citation>
    <scope>FUNCTION IN CYTOSKELETON ORGANIZATION</scope>
    <scope>INTERACTION WITH ACTN1 AND ACTN4</scope>
    <scope>SUBCELLULAR LOCATION</scope>
    <scope>DOMAIN</scope>
</reference>
<reference key="11">
    <citation type="journal article" date="2013" name="Genes Cells">
        <title>Junctional Rab13-binding protein (JRAB) regulates cell spreading via filamins.</title>
        <authorList>
            <person name="Sakane A."/>
            <person name="Alamir Mahmoud Abdallah A."/>
            <person name="Nakano K."/>
            <person name="Honda K."/>
            <person name="Kitamura T."/>
            <person name="Imoto I."/>
            <person name="Matsushita N."/>
            <person name="Sasaki T."/>
        </authorList>
    </citation>
    <scope>FUNCTION IN CYTOSKELETON ORGANIZATION</scope>
    <scope>SUBCELLULAR LOCATION</scope>
    <scope>INTERACTION WITH ACTN1; ACTN4; FLNA; FLNB AND FLNC</scope>
    <scope>DOMAIN</scope>
</reference>
<reference key="12">
    <citation type="journal article" date="2021" name="Commun. Biol.">
        <title>JRAB/MICAL-L2 undergoes liquid-liquid phase separation to form tubular recycling endosomes.</title>
        <authorList>
            <person name="Sakane A."/>
            <person name="Yano T.A."/>
            <person name="Uchihashi T."/>
            <person name="Horikawa K."/>
            <person name="Hara Y."/>
            <person name="Imoto I."/>
            <person name="Kurisu S."/>
            <person name="Yamada H."/>
            <person name="Takei K."/>
            <person name="Sasaki T."/>
        </authorList>
    </citation>
    <scope>FUNCTION</scope>
    <scope>DOMAIN</scope>
    <scope>INTERACTION WITH RAB8A</scope>
</reference>
<gene>
    <name type="primary">Micall2</name>
    <name type="synonym">Jrab</name>
</gene>
<comment type="function">
    <text evidence="7 8 10 11 12 13">Effector of small Rab GTPases RAB8A and RAB13 which is involved in junctional complexes assembly through the regulation of cell adhesion molecules transport to the plasma membrane and actin cytoskeleton reorganization. Regulates the endocytic recycling of occludins, claudins and E-cadherin to the plasma membrane and may thereby regulate the establishment of tight junctions and adherens junctions. In parallel, may regulate actin cytoskeleton reorganization directly through interaction with F-actin or indirectly through actinins and filamins (PubMed:16525024, PubMed:18094055, PubMed:20008558, PubMed:23100251, PubMed:23890175). Undergoes liquid-liquid phase separation to form tubular recycling endosomes. Plays 2 sequential roles in the biogenesis of tubular recycling endosomes: first organizes phase separation and then the closed form formed by interaction with RAB8A promotes endosomal tubulation (PubMed:33976349).</text>
</comment>
<comment type="subunit">
    <text evidence="7 8 9 10 11 12">Interacts with RAB13 (GTP-bound form); competes with RAB8A and is involved in tight junctions assembly (PubMed:16525024, PubMed:18094055, PubMed:20008558). Interacts with RAB8A; competes with RAB13 and is involved in E-cadherin endocytic recycling (PubMed:18094055). Interacts with RAB8B (PubMed:18094055). Interacts (preferentially in opened conformation) with ACTN1 and ACTN4; stimulated by RAB13 activation. Interacts (via calponin-homology (CH) domain) with the filamins FLNA, FLNB and FLNC (via actin-binding domain) (PubMed:18332111, PubMed:23100251, PubMed:23890175).</text>
</comment>
<comment type="interaction">
    <interactant intactId="EBI-1779852">
        <id>Q3TN34</id>
    </interactant>
    <interactant intactId="EBI-445071">
        <id>P57780</id>
        <label>Actn4</label>
    </interactant>
    <organismsDiffer>false</organismsDiffer>
    <experiments>9</experiments>
</comment>
<comment type="interaction">
    <interactant intactId="EBI-1779852">
        <id>Q3TN34</id>
    </interactant>
    <interactant intactId="EBI-1780121">
        <id>P51153</id>
        <label>RAB13</label>
    </interactant>
    <organismsDiffer>true</organismsDiffer>
    <experiments>8</experiments>
</comment>
<comment type="subcellular location">
    <subcellularLocation>
        <location>Cell membrane</location>
        <topology>Peripheral membrane protein</topology>
    </subcellularLocation>
    <subcellularLocation>
        <location evidence="8 9 11 12">Cell junction</location>
        <location evidence="8 9 11 12">Tight junction</location>
    </subcellularLocation>
    <subcellularLocation>
        <location evidence="7">Recycling endosome</location>
    </subcellularLocation>
    <subcellularLocation>
        <location evidence="10">Cell projection</location>
        <location evidence="10">Neuron projection</location>
    </subcellularLocation>
    <subcellularLocation>
        <location evidence="11 12">Cytoplasm</location>
        <location evidence="11 12">Cytoskeleton</location>
    </subcellularLocation>
</comment>
<comment type="tissue specificity">
    <text evidence="7">Detected in brain, lung, liver and kidney (at protein level).</text>
</comment>
<comment type="domain">
    <text evidence="10 11 12 13">Exists in a closed and an open conformation due to interaction of the C-terminal coiled-coil domain with an N-terminal region including the calponin-homology (CH) and the LIM zinc-binding domain. The conformational change is regulated by RAB13 and RAB8A. Adopts its closed form upon interaction with RAB8A and interaction with RAB13 causes conformational change from closed to open.</text>
</comment>
<organism>
    <name type="scientific">Mus musculus</name>
    <name type="common">Mouse</name>
    <dbReference type="NCBI Taxonomy" id="10090"/>
    <lineage>
        <taxon>Eukaryota</taxon>
        <taxon>Metazoa</taxon>
        <taxon>Chordata</taxon>
        <taxon>Craniata</taxon>
        <taxon>Vertebrata</taxon>
        <taxon>Euteleostomi</taxon>
        <taxon>Mammalia</taxon>
        <taxon>Eutheria</taxon>
        <taxon>Euarchontoglires</taxon>
        <taxon>Glires</taxon>
        <taxon>Rodentia</taxon>
        <taxon>Myomorpha</taxon>
        <taxon>Muroidea</taxon>
        <taxon>Muridae</taxon>
        <taxon>Murinae</taxon>
        <taxon>Mus</taxon>
        <taxon>Mus</taxon>
    </lineage>
</organism>
<name>MILK2_MOUSE</name>
<accession>Q3TN34</accession>
<accession>Q3TPY3</accession>
<accession>Q3UB65</accession>
<feature type="chain" id="PRO_0000424227" description="MICAL-like protein 2">
    <location>
        <begin position="1"/>
        <end position="1009"/>
    </location>
</feature>
<feature type="domain" description="Calponin-homology (CH)" evidence="3">
    <location>
        <begin position="1"/>
        <end position="107"/>
    </location>
</feature>
<feature type="domain" description="LIM zinc-binding" evidence="4">
    <location>
        <begin position="186"/>
        <end position="248"/>
    </location>
</feature>
<feature type="domain" description="bMERB" evidence="5">
    <location>
        <begin position="833"/>
        <end position="980"/>
    </location>
</feature>
<feature type="region of interest" description="Forms an intramolecular interaction with the C-terminal coiled coil domain keeping the protein in a closed conformation">
    <location>
        <begin position="1"/>
        <end position="260"/>
    </location>
</feature>
<feature type="region of interest" description="Disordered" evidence="6">
    <location>
        <begin position="114"/>
        <end position="180"/>
    </location>
</feature>
<feature type="region of interest" description="Disordered" evidence="6">
    <location>
        <begin position="247"/>
        <end position="268"/>
    </location>
</feature>
<feature type="region of interest" description="Mediates targeting to the cell plasma membrane">
    <location>
        <begin position="261"/>
        <end position="805"/>
    </location>
</feature>
<feature type="region of interest" description="Necessary and sufficient for interaction with actinins">
    <location>
        <begin position="261"/>
        <end position="393"/>
    </location>
</feature>
<feature type="region of interest" description="Disordered" evidence="6">
    <location>
        <begin position="348"/>
        <end position="447"/>
    </location>
</feature>
<feature type="region of interest" description="Disordered" evidence="6">
    <location>
        <begin position="655"/>
        <end position="834"/>
    </location>
</feature>
<feature type="region of interest" description="Forms an intramolecular interaction with the N-terminal Calponin-homology and LIM zinc-binding domains-containing region keeping the protein in a closed conformation">
    <location>
        <begin position="806"/>
        <end position="913"/>
    </location>
</feature>
<feature type="region of interest" description="Mediates interaction with RAB13 and is required for transition from the closed to the open conformation">
    <location>
        <begin position="913"/>
        <end position="1009"/>
    </location>
</feature>
<feature type="coiled-coil region" evidence="2">
    <location>
        <begin position="841"/>
        <end position="880"/>
    </location>
</feature>
<feature type="compositionally biased region" description="Polar residues" evidence="6">
    <location>
        <begin position="144"/>
        <end position="171"/>
    </location>
</feature>
<feature type="compositionally biased region" description="Polar residues" evidence="6">
    <location>
        <begin position="348"/>
        <end position="419"/>
    </location>
</feature>
<feature type="compositionally biased region" description="Pro residues" evidence="6">
    <location>
        <begin position="430"/>
        <end position="442"/>
    </location>
</feature>
<feature type="compositionally biased region" description="Basic and acidic residues" evidence="6">
    <location>
        <begin position="694"/>
        <end position="730"/>
    </location>
</feature>
<feature type="compositionally biased region" description="Low complexity" evidence="6">
    <location>
        <begin position="731"/>
        <end position="746"/>
    </location>
</feature>
<feature type="compositionally biased region" description="Low complexity" evidence="6">
    <location>
        <begin position="755"/>
        <end position="769"/>
    </location>
</feature>
<feature type="compositionally biased region" description="Basic and acidic residues" evidence="6">
    <location>
        <begin position="791"/>
        <end position="817"/>
    </location>
</feature>
<feature type="modified residue" description="Phosphoserine" evidence="1">
    <location>
        <position position="110"/>
    </location>
</feature>
<feature type="modified residue" description="Phosphoserine" evidence="1">
    <location>
        <position position="143"/>
    </location>
</feature>
<feature type="modified residue" description="Phosphoserine" evidence="1">
    <location>
        <position position="153"/>
    </location>
</feature>
<feature type="modified residue" description="Phosphoserine" evidence="1">
    <location>
        <position position="249"/>
    </location>
</feature>
<feature type="modified residue" description="Phosphoserine" evidence="16">
    <location>
        <position position="766"/>
    </location>
</feature>
<feature type="modified residue" description="Phosphoserine" evidence="1">
    <location>
        <position position="768"/>
    </location>
</feature>
<feature type="modified residue" description="Phosphoserine" evidence="15">
    <location>
        <position position="832"/>
    </location>
</feature>
<feature type="sequence conflict" description="In Ref. 2; BAE37602." evidence="14" ref="2">
    <original>S</original>
    <variation>L</variation>
    <location>
        <position position="770"/>
    </location>
</feature>
<sequence length="1009" mass="108288">MAAIKALQEWCRQQCEGYRDVSITNMTTSFRDGLAFCAILHRHRPDLINFSALRKENIYENNKLAFQVAEEQLGIPALLDAEDMVALKVPDRLSILTYVSQYYNYFHGRSPIGGMAGIKRPSSDSTEELSGKKGLSQPAKLPSPAQTQRSPLSPARTNPVVQRNEGGSQRPSPKAAPGTAGSSVSSICGVCGKHVHLVQRHLADGRLYHRSCFRCKQCSSTLHSGAYRATGEPGVFVCTHHSSEVTSVSPKSSNLASRKPGGVTADTRPFGVSWTVQEANGEGTPLRVRTAAWEHAGGNTTAKGFVQTELKPPSTSQVHVGSSAGPKLPTITVTTTSVTSKALTHVTNSSPIGWSSPAQSSPANFNSRPVVSPSARNTHLPGSQGQTASKGVKTQLNLNSESSNTAVTPAWTSSASKTQQAREKFFQTPPSAPAPASAPAPAPTSKVPTVVTVPTSKVPNVVTAPTSKVPTVVTVPTSKVPTVVSAPTSKVPTVVSAPTSKVPTVVNSTNSRVTTVVNAPTSKVPTVVSATNGRVPTVVTAHTGRVPAVMNTSASKVSPVVDAPAQESSREQALSVLRKALPALTGSGTQAPNRSFPATSSVLVTLPKNEVPQKVPSDKLSALTTQTPNFTIKLEPSAPVNVGNTAVFLQAGKKSPSISPRVGKTSVGSRPQAEVAGVKGPGPISQEGQEEGPEGWRARLKPVDKKTPAGRSLEQKEPVLAEPRIGDTSRKASSSSDSSVHITLTSIQHKRKPCPAGSGPSPAALSPSPSHRKKLAVPPSLDVSADWLQPEPKKQEDGTRSCKEEKSPTRWSRERSAVLDSGLAPPGEAVTSPVRLHPDYIPQEELQRQLQDIESQLDALELRGVELEKRLRAAEGDASEDSLMVDWFRLIHEKQLLLRLESELMYKSKDQRLEEQQLDLQGELRRLMDKPEGLKSPQDRQREQELLSQYVNTVNDRSDIVDFLDEDRLREQEEDQMLENMIQNLGLQRKKSKSFLSKIWSSKSKSGQA</sequence>
<keyword id="KW-0965">Cell junction</keyword>
<keyword id="KW-1003">Cell membrane</keyword>
<keyword id="KW-0966">Cell projection</keyword>
<keyword id="KW-0175">Coiled coil</keyword>
<keyword id="KW-0963">Cytoplasm</keyword>
<keyword id="KW-0206">Cytoskeleton</keyword>
<keyword id="KW-0967">Endosome</keyword>
<keyword id="KW-0440">LIM domain</keyword>
<keyword id="KW-0472">Membrane</keyword>
<keyword id="KW-0479">Metal-binding</keyword>
<keyword id="KW-0597">Phosphoprotein</keyword>
<keyword id="KW-1185">Reference proteome</keyword>
<keyword id="KW-0796">Tight junction</keyword>
<keyword id="KW-0862">Zinc</keyword>